<name>ENDA_PYRAE</name>
<feature type="chain" id="PRO_0000109476" description="tRNA-splicing endonuclease">
    <location>
        <begin position="1"/>
        <end position="183"/>
    </location>
</feature>
<feature type="active site" evidence="1">
    <location>
        <position position="120"/>
    </location>
</feature>
<feature type="active site" evidence="1">
    <location>
        <position position="128"/>
    </location>
</feature>
<feature type="active site" evidence="1">
    <location>
        <position position="159"/>
    </location>
</feature>
<feature type="strand" evidence="2">
    <location>
        <begin position="2"/>
        <end position="5"/>
    </location>
</feature>
<feature type="strand" evidence="2">
    <location>
        <begin position="7"/>
        <end position="12"/>
    </location>
</feature>
<feature type="helix" evidence="2">
    <location>
        <begin position="15"/>
        <end position="23"/>
    </location>
</feature>
<feature type="strand" evidence="2">
    <location>
        <begin position="28"/>
        <end position="30"/>
    </location>
</feature>
<feature type="helix" evidence="2">
    <location>
        <begin position="38"/>
        <end position="43"/>
    </location>
</feature>
<feature type="strand" evidence="2">
    <location>
        <begin position="48"/>
        <end position="51"/>
    </location>
</feature>
<feature type="helix" evidence="2">
    <location>
        <begin position="52"/>
        <end position="60"/>
    </location>
</feature>
<feature type="strand" evidence="2">
    <location>
        <begin position="65"/>
        <end position="67"/>
    </location>
</feature>
<feature type="helix" evidence="2">
    <location>
        <begin position="76"/>
        <end position="86"/>
    </location>
</feature>
<feature type="helix" evidence="2">
    <location>
        <begin position="90"/>
        <end position="102"/>
    </location>
</feature>
<feature type="strand" evidence="2">
    <location>
        <begin position="106"/>
        <end position="109"/>
    </location>
</feature>
<feature type="helix" evidence="2">
    <location>
        <begin position="111"/>
        <end position="113"/>
    </location>
</feature>
<feature type="strand" evidence="2">
    <location>
        <begin position="115"/>
        <end position="122"/>
    </location>
</feature>
<feature type="strand" evidence="2">
    <location>
        <begin position="124"/>
        <end position="128"/>
    </location>
</feature>
<feature type="strand" evidence="2">
    <location>
        <begin position="131"/>
        <end position="135"/>
    </location>
</feature>
<feature type="helix" evidence="2">
    <location>
        <begin position="144"/>
        <end position="153"/>
    </location>
</feature>
<feature type="strand" evidence="2">
    <location>
        <begin position="161"/>
        <end position="166"/>
    </location>
</feature>
<feature type="turn" evidence="2">
    <location>
        <begin position="168"/>
        <end position="170"/>
    </location>
</feature>
<feature type="strand" evidence="2">
    <location>
        <begin position="173"/>
        <end position="180"/>
    </location>
</feature>
<sequence>MIGYLRGLAVIVEDVEFARRLYKEGFYGRFLGYDKVKRDEVEKINAPLILGLYEALYLAEKGRLKVMGEDGREVAPEELAALGRERMRNFDEIYKIYKYFRDLGYVVKSGLKFGALFSVYEKGPGIDHAPMVVVFLEPDKGISATDITRGGRLSHSVRKTWTLATVLRQTGEVVLLGFGWARL</sequence>
<dbReference type="EC" id="4.6.1.16" evidence="1"/>
<dbReference type="EMBL" id="AE009441">
    <property type="protein sequence ID" value="AAL64075.1"/>
    <property type="molecule type" value="Genomic_DNA"/>
</dbReference>
<dbReference type="RefSeq" id="WP_011008543.1">
    <property type="nucleotide sequence ID" value="NC_003364.1"/>
</dbReference>
<dbReference type="PDB" id="2ZYZ">
    <property type="method" value="X-ray"/>
    <property type="resolution" value="1.70 A"/>
    <property type="chains" value="B/D=1-183"/>
</dbReference>
<dbReference type="PDBsum" id="2ZYZ"/>
<dbReference type="SMR" id="Q8ZVI1"/>
<dbReference type="STRING" id="178306.PAE2269"/>
<dbReference type="EnsemblBacteria" id="AAL64075">
    <property type="protein sequence ID" value="AAL64075"/>
    <property type="gene ID" value="PAE2269"/>
</dbReference>
<dbReference type="GeneID" id="1464410"/>
<dbReference type="KEGG" id="pai:PAE2269"/>
<dbReference type="PATRIC" id="fig|178306.9.peg.1689"/>
<dbReference type="eggNOG" id="arCOG01701">
    <property type="taxonomic scope" value="Archaea"/>
</dbReference>
<dbReference type="HOGENOM" id="CLU_114393_0_0_2"/>
<dbReference type="InParanoid" id="Q8ZVI1"/>
<dbReference type="BRENDA" id="4.6.1.16">
    <property type="organism ID" value="5239"/>
</dbReference>
<dbReference type="EvolutionaryTrace" id="Q8ZVI1"/>
<dbReference type="Proteomes" id="UP000002439">
    <property type="component" value="Chromosome"/>
</dbReference>
<dbReference type="GO" id="GO:0005737">
    <property type="term" value="C:cytoplasm"/>
    <property type="evidence" value="ECO:0000318"/>
    <property type="project" value="GO_Central"/>
</dbReference>
<dbReference type="GO" id="GO:0004519">
    <property type="term" value="F:endonuclease activity"/>
    <property type="evidence" value="ECO:0000318"/>
    <property type="project" value="GO_Central"/>
</dbReference>
<dbReference type="GO" id="GO:0016829">
    <property type="term" value="F:lyase activity"/>
    <property type="evidence" value="ECO:0007669"/>
    <property type="project" value="UniProtKB-KW"/>
</dbReference>
<dbReference type="GO" id="GO:0003676">
    <property type="term" value="F:nucleic acid binding"/>
    <property type="evidence" value="ECO:0007669"/>
    <property type="project" value="InterPro"/>
</dbReference>
<dbReference type="GO" id="GO:0000213">
    <property type="term" value="F:tRNA-intron endonuclease activity"/>
    <property type="evidence" value="ECO:0007669"/>
    <property type="project" value="UniProtKB-UniRule"/>
</dbReference>
<dbReference type="GO" id="GO:0008033">
    <property type="term" value="P:tRNA processing"/>
    <property type="evidence" value="ECO:0000318"/>
    <property type="project" value="GO_Central"/>
</dbReference>
<dbReference type="GO" id="GO:0006388">
    <property type="term" value="P:tRNA splicing, via endonucleolytic cleavage and ligation"/>
    <property type="evidence" value="ECO:0007669"/>
    <property type="project" value="UniProtKB-UniRule"/>
</dbReference>
<dbReference type="CDD" id="cd22363">
    <property type="entry name" value="tRNA-intron_lyase_C"/>
    <property type="match status" value="1"/>
</dbReference>
<dbReference type="FunFam" id="3.40.1170.20:FF:000003">
    <property type="entry name" value="tRNA-splicing endonuclease"/>
    <property type="match status" value="1"/>
</dbReference>
<dbReference type="FunFam" id="3.40.1350.10:FF:000006">
    <property type="entry name" value="tRNA-splicing endonuclease"/>
    <property type="match status" value="1"/>
</dbReference>
<dbReference type="Gene3D" id="3.40.1350.10">
    <property type="match status" value="1"/>
</dbReference>
<dbReference type="Gene3D" id="3.40.1170.20">
    <property type="entry name" value="tRNA intron endonuclease, N-terminal domain"/>
    <property type="match status" value="1"/>
</dbReference>
<dbReference type="HAMAP" id="MF_01833">
    <property type="entry name" value="EndA_short"/>
    <property type="match status" value="1"/>
</dbReference>
<dbReference type="InterPro" id="IPR011856">
    <property type="entry name" value="tRNA_endonuc-like_dom_sf"/>
</dbReference>
<dbReference type="InterPro" id="IPR036167">
    <property type="entry name" value="tRNA_intron_Endo_cat-like_sf"/>
</dbReference>
<dbReference type="InterPro" id="IPR006677">
    <property type="entry name" value="tRNA_intron_Endonuc_cat-like"/>
</dbReference>
<dbReference type="InterPro" id="IPR006678">
    <property type="entry name" value="tRNA_intron_Endonuc_N"/>
</dbReference>
<dbReference type="InterPro" id="IPR036740">
    <property type="entry name" value="tRNA_intron_Endonuc_N_sf"/>
</dbReference>
<dbReference type="InterPro" id="IPR006676">
    <property type="entry name" value="tRNA_splic"/>
</dbReference>
<dbReference type="InterPro" id="IPR016442">
    <property type="entry name" value="tRNA_splic_arch_short"/>
</dbReference>
<dbReference type="NCBIfam" id="TIGR00324">
    <property type="entry name" value="endA"/>
    <property type="match status" value="1"/>
</dbReference>
<dbReference type="PANTHER" id="PTHR21227">
    <property type="entry name" value="TRNA-SPLICING ENDONUCLEASE SUBUNIT SEN2"/>
    <property type="match status" value="1"/>
</dbReference>
<dbReference type="PANTHER" id="PTHR21227:SF0">
    <property type="entry name" value="TRNA-SPLICING ENDONUCLEASE SUBUNIT SEN2"/>
    <property type="match status" value="1"/>
</dbReference>
<dbReference type="Pfam" id="PF01974">
    <property type="entry name" value="tRNA_int_endo"/>
    <property type="match status" value="1"/>
</dbReference>
<dbReference type="Pfam" id="PF02778">
    <property type="entry name" value="tRNA_int_endo_N"/>
    <property type="match status" value="1"/>
</dbReference>
<dbReference type="PIRSF" id="PIRSF005285">
    <property type="entry name" value="tRNA_splic_archaea"/>
    <property type="match status" value="1"/>
</dbReference>
<dbReference type="SUPFAM" id="SSF53032">
    <property type="entry name" value="tRNA-intron endonuclease catalytic domain-like"/>
    <property type="match status" value="1"/>
</dbReference>
<dbReference type="SUPFAM" id="SSF55267">
    <property type="entry name" value="tRNA-intron endonuclease N-terminal domain-like"/>
    <property type="match status" value="1"/>
</dbReference>
<accession>Q8ZVI1</accession>
<proteinExistence type="evidence at protein level"/>
<comment type="function">
    <text evidence="1">Endonuclease that removes tRNA introns. Cleaves pre-tRNA at the 5'- and 3'-splice sites to release the intron. The products are an intron and two tRNA half-molecules bearing 2',3' cyclic phosphate and 5'-OH termini. Recognizes a pseudosymmetric substrate in which 2 bulged loops of 3 bases are separated by a stem of 4 bp.</text>
</comment>
<comment type="catalytic activity">
    <reaction evidence="1">
        <text>pretRNA = a 3'-half-tRNA molecule with a 5'-OH end + a 5'-half-tRNA molecule with a 2',3'-cyclic phosphate end + an intron with a 2',3'-cyclic phosphate and a 5'-hydroxyl terminus.</text>
        <dbReference type="EC" id="4.6.1.16"/>
    </reaction>
</comment>
<comment type="subunit">
    <text evidence="1">Homotetramer; although the tetramer contains four active sites, only two participate in the cleavage. Therefore, it should be considered as a dimer of dimers.</text>
</comment>
<comment type="similarity">
    <text evidence="1">Belongs to the tRNA-intron endonuclease family. Archaeal short subfamily.</text>
</comment>
<keyword id="KW-0002">3D-structure</keyword>
<keyword id="KW-0456">Lyase</keyword>
<keyword id="KW-1185">Reference proteome</keyword>
<keyword id="KW-0819">tRNA processing</keyword>
<gene>
    <name evidence="1" type="primary">endA</name>
    <name type="ordered locus">PAE2269</name>
</gene>
<protein>
    <recommendedName>
        <fullName evidence="1">tRNA-splicing endonuclease</fullName>
        <ecNumber evidence="1">4.6.1.16</ecNumber>
    </recommendedName>
    <alternativeName>
        <fullName evidence="1">tRNA-intron endonuclease</fullName>
    </alternativeName>
</protein>
<evidence type="ECO:0000255" key="1">
    <source>
        <dbReference type="HAMAP-Rule" id="MF_01833"/>
    </source>
</evidence>
<evidence type="ECO:0007829" key="2">
    <source>
        <dbReference type="PDB" id="2ZYZ"/>
    </source>
</evidence>
<reference key="1">
    <citation type="journal article" date="2002" name="Proc. Natl. Acad. Sci. U.S.A.">
        <title>Genome sequence of the hyperthermophilic crenarchaeon Pyrobaculum aerophilum.</title>
        <authorList>
            <person name="Fitz-Gibbon S.T."/>
            <person name="Ladner H."/>
            <person name="Kim U.-J."/>
            <person name="Stetter K.O."/>
            <person name="Simon M.I."/>
            <person name="Miller J.H."/>
        </authorList>
    </citation>
    <scope>NUCLEOTIDE SEQUENCE [LARGE SCALE GENOMIC DNA]</scope>
    <source>
        <strain>ATCC 51768 / DSM 7523 / JCM 9630 / CIP 104966 / NBRC 100827 / IM2</strain>
    </source>
</reference>
<organism>
    <name type="scientific">Pyrobaculum aerophilum (strain ATCC 51768 / DSM 7523 / JCM 9630 / CIP 104966 / NBRC 100827 / IM2)</name>
    <dbReference type="NCBI Taxonomy" id="178306"/>
    <lineage>
        <taxon>Archaea</taxon>
        <taxon>Thermoproteota</taxon>
        <taxon>Thermoprotei</taxon>
        <taxon>Thermoproteales</taxon>
        <taxon>Thermoproteaceae</taxon>
        <taxon>Pyrobaculum</taxon>
    </lineage>
</organism>